<gene>
    <name type="primary">dcl1</name>
    <name type="ORF">AFUA_5G11790</name>
</gene>
<dbReference type="EC" id="3.1.26.-"/>
<dbReference type="EC" id="3.6.4.-"/>
<dbReference type="EMBL" id="AAHF01000003">
    <property type="protein sequence ID" value="EAL91433.2"/>
    <property type="status" value="ALT_SEQ"/>
    <property type="molecule type" value="Genomic_DNA"/>
</dbReference>
<dbReference type="RefSeq" id="XP_753471.2">
    <property type="nucleotide sequence ID" value="XM_748378.2"/>
</dbReference>
<dbReference type="SMR" id="Q4WVE3"/>
<dbReference type="STRING" id="330879.Q4WVE3"/>
<dbReference type="GeneID" id="3511514"/>
<dbReference type="KEGG" id="afm:AFUA_5G11790"/>
<dbReference type="eggNOG" id="KOG0701">
    <property type="taxonomic scope" value="Eukaryota"/>
</dbReference>
<dbReference type="HOGENOM" id="CLU_000907_4_3_1"/>
<dbReference type="InParanoid" id="Q4WVE3"/>
<dbReference type="OrthoDB" id="416741at2759"/>
<dbReference type="Proteomes" id="UP000002530">
    <property type="component" value="Chromosome 5"/>
</dbReference>
<dbReference type="GO" id="GO:0005737">
    <property type="term" value="C:cytoplasm"/>
    <property type="evidence" value="ECO:0000318"/>
    <property type="project" value="GO_Central"/>
</dbReference>
<dbReference type="GO" id="GO:0005634">
    <property type="term" value="C:nucleus"/>
    <property type="evidence" value="ECO:0000318"/>
    <property type="project" value="GO_Central"/>
</dbReference>
<dbReference type="GO" id="GO:0005524">
    <property type="term" value="F:ATP binding"/>
    <property type="evidence" value="ECO:0007669"/>
    <property type="project" value="UniProtKB-KW"/>
</dbReference>
<dbReference type="GO" id="GO:0003677">
    <property type="term" value="F:DNA binding"/>
    <property type="evidence" value="ECO:0007669"/>
    <property type="project" value="InterPro"/>
</dbReference>
<dbReference type="GO" id="GO:0004386">
    <property type="term" value="F:helicase activity"/>
    <property type="evidence" value="ECO:0007669"/>
    <property type="project" value="UniProtKB-KW"/>
</dbReference>
<dbReference type="GO" id="GO:0046872">
    <property type="term" value="F:metal ion binding"/>
    <property type="evidence" value="ECO:0007669"/>
    <property type="project" value="UniProtKB-KW"/>
</dbReference>
<dbReference type="GO" id="GO:0004525">
    <property type="term" value="F:ribonuclease III activity"/>
    <property type="evidence" value="ECO:0000318"/>
    <property type="project" value="GO_Central"/>
</dbReference>
<dbReference type="GO" id="GO:0003723">
    <property type="term" value="F:RNA binding"/>
    <property type="evidence" value="ECO:0000318"/>
    <property type="project" value="GO_Central"/>
</dbReference>
<dbReference type="GO" id="GO:0051607">
    <property type="term" value="P:defense response to virus"/>
    <property type="evidence" value="ECO:0007669"/>
    <property type="project" value="UniProtKB-KW"/>
</dbReference>
<dbReference type="GO" id="GO:0050688">
    <property type="term" value="P:regulation of defense response to virus"/>
    <property type="evidence" value="ECO:0007669"/>
    <property type="project" value="UniProtKB-KW"/>
</dbReference>
<dbReference type="GO" id="GO:0030422">
    <property type="term" value="P:siRNA processing"/>
    <property type="evidence" value="ECO:0000318"/>
    <property type="project" value="GO_Central"/>
</dbReference>
<dbReference type="CDD" id="cd18034">
    <property type="entry name" value="DEXHc_dicer"/>
    <property type="match status" value="1"/>
</dbReference>
<dbReference type="CDD" id="cd00593">
    <property type="entry name" value="RIBOc"/>
    <property type="match status" value="2"/>
</dbReference>
<dbReference type="CDD" id="cd18802">
    <property type="entry name" value="SF2_C_dicer"/>
    <property type="match status" value="1"/>
</dbReference>
<dbReference type="FunFam" id="1.10.1520.10:FF:000015">
    <property type="entry name" value="Dicer-like protein 1"/>
    <property type="match status" value="1"/>
</dbReference>
<dbReference type="FunFam" id="1.10.1520.10:FF:000026">
    <property type="entry name" value="Dicer-like protein 1"/>
    <property type="match status" value="1"/>
</dbReference>
<dbReference type="FunFam" id="3.30.160.380:FF:000004">
    <property type="entry name" value="Dicer-like protein 1"/>
    <property type="match status" value="1"/>
</dbReference>
<dbReference type="FunFam" id="3.40.50.300:FF:001669">
    <property type="entry name" value="Dicer-like protein 1"/>
    <property type="match status" value="1"/>
</dbReference>
<dbReference type="FunFam" id="3.40.50.300:FF:001988">
    <property type="entry name" value="Dicer-like protein 1"/>
    <property type="match status" value="1"/>
</dbReference>
<dbReference type="Gene3D" id="3.30.160.380">
    <property type="entry name" value="Dicer dimerisation domain"/>
    <property type="match status" value="1"/>
</dbReference>
<dbReference type="Gene3D" id="3.40.50.300">
    <property type="entry name" value="P-loop containing nucleotide triphosphate hydrolases"/>
    <property type="match status" value="2"/>
</dbReference>
<dbReference type="Gene3D" id="1.10.1520.10">
    <property type="entry name" value="Ribonuclease III domain"/>
    <property type="match status" value="2"/>
</dbReference>
<dbReference type="InterPro" id="IPR038248">
    <property type="entry name" value="Dicer_dimer_sf"/>
</dbReference>
<dbReference type="InterPro" id="IPR005034">
    <property type="entry name" value="Dicer_dimerisation_dom"/>
</dbReference>
<dbReference type="InterPro" id="IPR056755">
    <property type="entry name" value="DSRM_2"/>
</dbReference>
<dbReference type="InterPro" id="IPR006935">
    <property type="entry name" value="Helicase/UvrB_N"/>
</dbReference>
<dbReference type="InterPro" id="IPR014001">
    <property type="entry name" value="Helicase_ATP-bd"/>
</dbReference>
<dbReference type="InterPro" id="IPR001650">
    <property type="entry name" value="Helicase_C-like"/>
</dbReference>
<dbReference type="InterPro" id="IPR027417">
    <property type="entry name" value="P-loop_NTPase"/>
</dbReference>
<dbReference type="InterPro" id="IPR003100">
    <property type="entry name" value="PAZ_dom"/>
</dbReference>
<dbReference type="InterPro" id="IPR000999">
    <property type="entry name" value="RNase_III_dom"/>
</dbReference>
<dbReference type="InterPro" id="IPR036389">
    <property type="entry name" value="RNase_III_sf"/>
</dbReference>
<dbReference type="PANTHER" id="PTHR14950:SF62">
    <property type="entry name" value="DICER-LIKE PROTEIN 1"/>
    <property type="match status" value="1"/>
</dbReference>
<dbReference type="PANTHER" id="PTHR14950">
    <property type="entry name" value="DICER-RELATED"/>
    <property type="match status" value="1"/>
</dbReference>
<dbReference type="Pfam" id="PF03368">
    <property type="entry name" value="Dicer_dimer"/>
    <property type="match status" value="1"/>
</dbReference>
<dbReference type="Pfam" id="PF24995">
    <property type="entry name" value="DSRM_2"/>
    <property type="match status" value="1"/>
</dbReference>
<dbReference type="Pfam" id="PF00271">
    <property type="entry name" value="Helicase_C"/>
    <property type="match status" value="1"/>
</dbReference>
<dbReference type="Pfam" id="PF04851">
    <property type="entry name" value="ResIII"/>
    <property type="match status" value="1"/>
</dbReference>
<dbReference type="Pfam" id="PF00636">
    <property type="entry name" value="Ribonuclease_3"/>
    <property type="match status" value="2"/>
</dbReference>
<dbReference type="SMART" id="SM00487">
    <property type="entry name" value="DEXDc"/>
    <property type="match status" value="1"/>
</dbReference>
<dbReference type="SMART" id="SM00490">
    <property type="entry name" value="HELICc"/>
    <property type="match status" value="1"/>
</dbReference>
<dbReference type="SMART" id="SM00535">
    <property type="entry name" value="RIBOc"/>
    <property type="match status" value="2"/>
</dbReference>
<dbReference type="SUPFAM" id="SSF52540">
    <property type="entry name" value="P-loop containing nucleoside triphosphate hydrolases"/>
    <property type="match status" value="1"/>
</dbReference>
<dbReference type="SUPFAM" id="SSF69065">
    <property type="entry name" value="RNase III domain-like"/>
    <property type="match status" value="2"/>
</dbReference>
<dbReference type="PROSITE" id="PS51327">
    <property type="entry name" value="DICER_DSRBF"/>
    <property type="match status" value="1"/>
</dbReference>
<dbReference type="PROSITE" id="PS51192">
    <property type="entry name" value="HELICASE_ATP_BIND_1"/>
    <property type="match status" value="1"/>
</dbReference>
<dbReference type="PROSITE" id="PS51194">
    <property type="entry name" value="HELICASE_CTER"/>
    <property type="match status" value="1"/>
</dbReference>
<dbReference type="PROSITE" id="PS50821">
    <property type="entry name" value="PAZ"/>
    <property type="match status" value="1"/>
</dbReference>
<dbReference type="PROSITE" id="PS00517">
    <property type="entry name" value="RNASE_3_1"/>
    <property type="match status" value="1"/>
</dbReference>
<dbReference type="PROSITE" id="PS50142">
    <property type="entry name" value="RNASE_3_2"/>
    <property type="match status" value="2"/>
</dbReference>
<protein>
    <recommendedName>
        <fullName>Dicer-like protein 1</fullName>
    </recommendedName>
    <domain>
        <recommendedName>
            <fullName>Endoribonuclease dcl1</fullName>
            <ecNumber>3.1.26.-</ecNumber>
        </recommendedName>
    </domain>
    <domain>
        <recommendedName>
            <fullName>ATP-dependent helicase dcl1</fullName>
            <ecNumber>3.6.4.-</ecNumber>
        </recommendedName>
    </domain>
</protein>
<comment type="function">
    <text evidence="1">Dicer-like endonuclease involved in cleaving double-stranded RNA in the RNA interference (RNAi) pathway. Produces 21 to 25 bp dsRNAs (siRNAs) which target the selective destruction of homologous RNAs leading to sequence-specific suppression of gene expression, called post-transcriptional gene silencing (PTGS). Part of a broad host defense response against viral infection and transposons (By similarity).</text>
</comment>
<comment type="cofactor">
    <cofactor evidence="1">
        <name>Mg(2+)</name>
        <dbReference type="ChEBI" id="CHEBI:18420"/>
    </cofactor>
    <cofactor evidence="1">
        <name>Mn(2+)</name>
        <dbReference type="ChEBI" id="CHEBI:29035"/>
    </cofactor>
</comment>
<comment type="similarity">
    <text evidence="7">Belongs to the helicase family. Dicer subfamily.</text>
</comment>
<comment type="sequence caution" evidence="9">
    <conflict type="erroneous gene model prediction">
        <sequence resource="EMBL-CDS" id="EAL91433"/>
    </conflict>
</comment>
<sequence>MAEQISLVDVSSSVSLRGEDSSNVALLRDVFLPDVAASDPAESSVDVQDEHSSDDSDNENEVFPKQNDFSQRRRIQNAQFEALLSKCTDADSNEAFDRAPIALSDGELSIAHLVKKQDLGNGMLDPREYQIELFERAKTQNTIAVLDTGSGKTLIAVLLLRHTILNELDDRANGKTHRVSFFLVDSVTLAYQQAAVLRNNIDQNVAHFFGAMGTDLWDKRTWDKHLQRNMVIVCTAEILNQCLLNSYVRMDQINLLIFDEAHHAKKDHPYARIIRDSYFKAQPSQRPRVFGMTASPIDTKGDITEAATRLETFLDSRIATTSKITLLREVVSRPIEKVWAYNRLEPPFATELYKLMDTRYGNIKVLEGVYRFAWNASSELGKWCSDRAWWHALADDVLPKLEGNINKLIESNTMKAEHGAVFKDIIRIREASETVKNYFFTDPELPGELSPKVQRLRMELSKHFNDTTGTKCIVFTQKRYTAKILNELFTVLNIPNLRPGVLIGVRPGDIGGMNITFRQQFLALVKFRTGEINCLFATSVAEEGLDIPDCNLVIRFDLYRTLIQYVQSRGRARHCTSTYAIMVEKDNAEHEGRLKEIREAENIMRRFCEILPEDRILHGNDHDLDSFLQEEEGRRTFTVKSTGAKLTYHSAIAILARYASSLQYEKETVPQVTYVVTIASNAYVCEVILPEKSPIRGLTGSPAMRKAVAKRSAAFDTCLLLRKNRLLDGYFNSIYHRRLPAMRNAKLAITCKRTNAYDMLLKPSIWAKQRTTPTETFYGIHMSLLPSKPLSRDHRPILLLTREKLPEFPAFSIYLDEDVETKVLSYPLKHGLQISVDKLQSLTVFTLRIFRDIFHKVYEHEVQKMPYWLAPAEAIDGRGSGKNPRDCIDWDTVSFVHNNDEITFTRNLNPESLVNRFIFDNWDGRFRYFTVAVADTLQPSDPPPPSVPRRRYMNNIMNYTLSLSKNSRARFLSSCDWNQPVLQAELVRLRRNLLDKMTTQEKEMQTECFICAEPLRISALPPSIVSTCLAFPAIISRLDSYLIALEACDELELVIRPDFALEAFTKDSDNTEEHRGQQIHFQRGMGKNYERLEFLGDCFLKMATSIALFSQNPNDDEFDYHVNRMCLICNKNLFNTAIKKQIYRYIRSRGFSRHIWYPDGLTLLHGKDHSTKLLSEGKHALGEKTIADVCEALIGASLLSGGPEHRFDMATKAVSALVDSPSHRVSCWKEYITLYTLPKYQTEKHRGSEDDLARHVEEELGYHFTYPRLLASAITHPSLPSTWGYRVPCYQRLEFLGDSLLDMVCVEDLFRRFPDRDPQWLSEHKMAMVSNKFLGALSVKLGFHRRIMAFSNPLQAQITHYVEEIETAQAESQGAVDYWVVAKDPPKCLPDMVEAYLGAIFVDSKFDFQVIEAFFERQIKPFFEDMSIYDTFANKHPTTFLHNKLTNEYGCTNYCLKAGELPTIDGAPATVLAAVIVHGNVISEARSSSSRYAKITASEKALAVLDGLLPSEFCQKYRCDCKETKNSSSVVEIGTAI</sequence>
<proteinExistence type="inferred from homology"/>
<organism>
    <name type="scientific">Aspergillus fumigatus (strain ATCC MYA-4609 / CBS 101355 / FGSC A1100 / Af293)</name>
    <name type="common">Neosartorya fumigata</name>
    <dbReference type="NCBI Taxonomy" id="330879"/>
    <lineage>
        <taxon>Eukaryota</taxon>
        <taxon>Fungi</taxon>
        <taxon>Dikarya</taxon>
        <taxon>Ascomycota</taxon>
        <taxon>Pezizomycotina</taxon>
        <taxon>Eurotiomycetes</taxon>
        <taxon>Eurotiomycetidae</taxon>
        <taxon>Eurotiales</taxon>
        <taxon>Aspergillaceae</taxon>
        <taxon>Aspergillus</taxon>
        <taxon>Aspergillus subgen. Fumigati</taxon>
    </lineage>
</organism>
<name>DCL1_ASPFU</name>
<reference key="1">
    <citation type="journal article" date="2005" name="Nature">
        <title>Genomic sequence of the pathogenic and allergenic filamentous fungus Aspergillus fumigatus.</title>
        <authorList>
            <person name="Nierman W.C."/>
            <person name="Pain A."/>
            <person name="Anderson M.J."/>
            <person name="Wortman J.R."/>
            <person name="Kim H.S."/>
            <person name="Arroyo J."/>
            <person name="Berriman M."/>
            <person name="Abe K."/>
            <person name="Archer D.B."/>
            <person name="Bermejo C."/>
            <person name="Bennett J.W."/>
            <person name="Bowyer P."/>
            <person name="Chen D."/>
            <person name="Collins M."/>
            <person name="Coulsen R."/>
            <person name="Davies R."/>
            <person name="Dyer P.S."/>
            <person name="Farman M.L."/>
            <person name="Fedorova N."/>
            <person name="Fedorova N.D."/>
            <person name="Feldblyum T.V."/>
            <person name="Fischer R."/>
            <person name="Fosker N."/>
            <person name="Fraser A."/>
            <person name="Garcia J.L."/>
            <person name="Garcia M.J."/>
            <person name="Goble A."/>
            <person name="Goldman G.H."/>
            <person name="Gomi K."/>
            <person name="Griffith-Jones S."/>
            <person name="Gwilliam R."/>
            <person name="Haas B.J."/>
            <person name="Haas H."/>
            <person name="Harris D.E."/>
            <person name="Horiuchi H."/>
            <person name="Huang J."/>
            <person name="Humphray S."/>
            <person name="Jimenez J."/>
            <person name="Keller N."/>
            <person name="Khouri H."/>
            <person name="Kitamoto K."/>
            <person name="Kobayashi T."/>
            <person name="Konzack S."/>
            <person name="Kulkarni R."/>
            <person name="Kumagai T."/>
            <person name="Lafton A."/>
            <person name="Latge J.-P."/>
            <person name="Li W."/>
            <person name="Lord A."/>
            <person name="Lu C."/>
            <person name="Majoros W.H."/>
            <person name="May G.S."/>
            <person name="Miller B.L."/>
            <person name="Mohamoud Y."/>
            <person name="Molina M."/>
            <person name="Monod M."/>
            <person name="Mouyna I."/>
            <person name="Mulligan S."/>
            <person name="Murphy L.D."/>
            <person name="O'Neil S."/>
            <person name="Paulsen I."/>
            <person name="Penalva M.A."/>
            <person name="Pertea M."/>
            <person name="Price C."/>
            <person name="Pritchard B.L."/>
            <person name="Quail M.A."/>
            <person name="Rabbinowitsch E."/>
            <person name="Rawlins N."/>
            <person name="Rajandream M.A."/>
            <person name="Reichard U."/>
            <person name="Renauld H."/>
            <person name="Robson G.D."/>
            <person name="Rodriguez de Cordoba S."/>
            <person name="Rodriguez-Pena J.M."/>
            <person name="Ronning C.M."/>
            <person name="Rutter S."/>
            <person name="Salzberg S.L."/>
            <person name="Sanchez M."/>
            <person name="Sanchez-Ferrero J.C."/>
            <person name="Saunders D."/>
            <person name="Seeger K."/>
            <person name="Squares R."/>
            <person name="Squares S."/>
            <person name="Takeuchi M."/>
            <person name="Tekaia F."/>
            <person name="Turner G."/>
            <person name="Vazquez de Aldana C.R."/>
            <person name="Weidman J."/>
            <person name="White O."/>
            <person name="Woodward J.R."/>
            <person name="Yu J.-H."/>
            <person name="Fraser C.M."/>
            <person name="Galagan J.E."/>
            <person name="Asai K."/>
            <person name="Machida M."/>
            <person name="Hall N."/>
            <person name="Barrell B.G."/>
            <person name="Denning D.W."/>
        </authorList>
    </citation>
    <scope>NUCLEOTIDE SEQUENCE [LARGE SCALE GENOMIC DNA]</scope>
    <source>
        <strain>ATCC MYA-4609 / CBS 101355 / FGSC A1100 / Af293</strain>
    </source>
</reference>
<feature type="chain" id="PRO_0000306774" description="Dicer-like protein 1">
    <location>
        <begin position="1"/>
        <end position="1537"/>
    </location>
</feature>
<feature type="domain" description="Helicase ATP-binding" evidence="5">
    <location>
        <begin position="133"/>
        <end position="314"/>
    </location>
</feature>
<feature type="domain" description="Helicase C-terminal" evidence="6">
    <location>
        <begin position="459"/>
        <end position="618"/>
    </location>
</feature>
<feature type="domain" description="Dicer dsRNA-binding fold" evidence="7">
    <location>
        <begin position="651"/>
        <end position="741"/>
    </location>
</feature>
<feature type="domain" description="PAZ" evidence="3">
    <location>
        <begin position="891"/>
        <end position="1019"/>
    </location>
</feature>
<feature type="domain" description="RNase III 1" evidence="4">
    <location>
        <begin position="1043"/>
        <end position="1202"/>
    </location>
</feature>
<feature type="domain" description="RNase III 2" evidence="4">
    <location>
        <begin position="1253"/>
        <end position="1405"/>
    </location>
</feature>
<feature type="domain" description="DRBM">
    <location>
        <begin position="1439"/>
        <end position="1507"/>
    </location>
</feature>
<feature type="region of interest" description="Disordered" evidence="8">
    <location>
        <begin position="38"/>
        <end position="68"/>
    </location>
</feature>
<feature type="short sequence motif" description="DEAH box">
    <location>
        <begin position="259"/>
        <end position="262"/>
    </location>
</feature>
<feature type="binding site" evidence="5">
    <location>
        <begin position="146"/>
        <end position="153"/>
    </location>
    <ligand>
        <name>ATP</name>
        <dbReference type="ChEBI" id="CHEBI:30616"/>
    </ligand>
</feature>
<feature type="binding site" evidence="1">
    <location>
        <position position="1294"/>
    </location>
    <ligand>
        <name>Mg(2+)</name>
        <dbReference type="ChEBI" id="CHEBI:18420"/>
    </ligand>
</feature>
<feature type="binding site" evidence="1">
    <location>
        <position position="1391"/>
    </location>
    <ligand>
        <name>Mg(2+)</name>
        <dbReference type="ChEBI" id="CHEBI:18420"/>
    </ligand>
</feature>
<feature type="binding site" evidence="1">
    <location>
        <position position="1394"/>
    </location>
    <ligand>
        <name>Mg(2+)</name>
        <dbReference type="ChEBI" id="CHEBI:18420"/>
    </ligand>
</feature>
<feature type="binding site" evidence="2">
    <location>
        <position position="1451"/>
    </location>
    <ligand>
        <name>Zn(2+)</name>
        <dbReference type="ChEBI" id="CHEBI:29105"/>
    </ligand>
</feature>
<feature type="binding site" evidence="2">
    <location>
        <position position="1478"/>
    </location>
    <ligand>
        <name>Zn(2+)</name>
        <dbReference type="ChEBI" id="CHEBI:29105"/>
    </ligand>
</feature>
<feature type="binding site" evidence="2">
    <location>
        <position position="1519"/>
    </location>
    <ligand>
        <name>Zn(2+)</name>
        <dbReference type="ChEBI" id="CHEBI:29105"/>
    </ligand>
</feature>
<feature type="binding site" evidence="2">
    <location>
        <position position="1521"/>
    </location>
    <ligand>
        <name>Zn(2+)</name>
        <dbReference type="ChEBI" id="CHEBI:29105"/>
    </ligand>
</feature>
<feature type="site" description="Important for activity" evidence="1">
    <location>
        <position position="1387"/>
    </location>
</feature>
<accession>Q4WVE3</accession>
<evidence type="ECO:0000250" key="1"/>
<evidence type="ECO:0000250" key="2">
    <source>
        <dbReference type="UniProtKB" id="Q09884"/>
    </source>
</evidence>
<evidence type="ECO:0000255" key="3">
    <source>
        <dbReference type="PROSITE-ProRule" id="PRU00142"/>
    </source>
</evidence>
<evidence type="ECO:0000255" key="4">
    <source>
        <dbReference type="PROSITE-ProRule" id="PRU00177"/>
    </source>
</evidence>
<evidence type="ECO:0000255" key="5">
    <source>
        <dbReference type="PROSITE-ProRule" id="PRU00541"/>
    </source>
</evidence>
<evidence type="ECO:0000255" key="6">
    <source>
        <dbReference type="PROSITE-ProRule" id="PRU00542"/>
    </source>
</evidence>
<evidence type="ECO:0000255" key="7">
    <source>
        <dbReference type="PROSITE-ProRule" id="PRU00657"/>
    </source>
</evidence>
<evidence type="ECO:0000256" key="8">
    <source>
        <dbReference type="SAM" id="MobiDB-lite"/>
    </source>
</evidence>
<evidence type="ECO:0000305" key="9"/>
<keyword id="KW-0051">Antiviral defense</keyword>
<keyword id="KW-0930">Antiviral protein</keyword>
<keyword id="KW-0067">ATP-binding</keyword>
<keyword id="KW-0347">Helicase</keyword>
<keyword id="KW-0378">Hydrolase</keyword>
<keyword id="KW-0460">Magnesium</keyword>
<keyword id="KW-0464">Manganese</keyword>
<keyword id="KW-0479">Metal-binding</keyword>
<keyword id="KW-0547">Nucleotide-binding</keyword>
<keyword id="KW-1185">Reference proteome</keyword>
<keyword id="KW-0677">Repeat</keyword>
<keyword id="KW-0694">RNA-binding</keyword>
<keyword id="KW-0862">Zinc</keyword>